<evidence type="ECO:0000250" key="1"/>
<evidence type="ECO:0000256" key="2">
    <source>
        <dbReference type="SAM" id="MobiDB-lite"/>
    </source>
</evidence>
<evidence type="ECO:0000305" key="3"/>
<keyword id="KW-0226">DNA condensation</keyword>
<keyword id="KW-0238">DNA-binding</keyword>
<keyword id="KW-0597">Phosphoprotein</keyword>
<keyword id="KW-1185">Reference proteome</keyword>
<proteinExistence type="inferred from homology"/>
<accession>P68573</accession>
<accession>O31946</accession>
<accession>O64075</accession>
<protein>
    <recommendedName>
        <fullName>SPbeta prophage-derived DNA-binding protein HU 2</fullName>
    </recommendedName>
</protein>
<sequence>MNKTELIAKVAEKQGVSKKEGAPSVEKVFDTISEALKSGEKVSIPGFGTFEVRERAARKGRNPQTGEEIDIPATKAPAFKPAKALKDAVKAK</sequence>
<feature type="chain" id="PRO_0000104914" description="SPbeta prophage-derived DNA-binding protein HU 2">
    <location>
        <begin position="1"/>
        <end position="92"/>
    </location>
</feature>
<feature type="region of interest" description="Disordered" evidence="2">
    <location>
        <begin position="55"/>
        <end position="77"/>
    </location>
</feature>
<feature type="modified residue" description="Phosphothreonine" evidence="1">
    <location>
        <position position="4"/>
    </location>
</feature>
<name>DBH2_BACSU</name>
<comment type="function">
    <text evidence="1">Histone-like DNA-binding protein which is capable of wrapping DNA to stabilize it, and thus to prevent its denaturation under extreme environmental conditions.</text>
</comment>
<comment type="subunit">
    <text evidence="1">Homodimer.</text>
</comment>
<comment type="similarity">
    <text evidence="3">Belongs to the bacterial histone-like protein family.</text>
</comment>
<gene>
    <name type="primary">hup2</name>
    <name type="synonym">yonN</name>
    <name type="ordered locus">BSU21050</name>
</gene>
<organism>
    <name type="scientific">Bacillus subtilis (strain 168)</name>
    <dbReference type="NCBI Taxonomy" id="224308"/>
    <lineage>
        <taxon>Bacteria</taxon>
        <taxon>Bacillati</taxon>
        <taxon>Bacillota</taxon>
        <taxon>Bacilli</taxon>
        <taxon>Bacillales</taxon>
        <taxon>Bacillaceae</taxon>
        <taxon>Bacillus</taxon>
    </lineage>
</organism>
<dbReference type="EMBL" id="AL009126">
    <property type="protein sequence ID" value="CAB14023.1"/>
    <property type="molecule type" value="Genomic_DNA"/>
</dbReference>
<dbReference type="SMR" id="P68573"/>
<dbReference type="FunCoup" id="P68573">
    <property type="interactions" value="545"/>
</dbReference>
<dbReference type="STRING" id="224308.BSU21050"/>
<dbReference type="PaxDb" id="224308-BSU21050"/>
<dbReference type="EnsemblBacteria" id="CAB14023">
    <property type="protein sequence ID" value="CAB14023"/>
    <property type="gene ID" value="BSU_21050"/>
</dbReference>
<dbReference type="GeneID" id="939170"/>
<dbReference type="KEGG" id="bsu:BSU21050"/>
<dbReference type="PATRIC" id="fig|224308.179.peg.2299"/>
<dbReference type="eggNOG" id="COG0776">
    <property type="taxonomic scope" value="Bacteria"/>
</dbReference>
<dbReference type="InParanoid" id="P68573"/>
<dbReference type="OrthoDB" id="9799835at2"/>
<dbReference type="PhylomeDB" id="P68573"/>
<dbReference type="BioCyc" id="BSUB:BSU21050-MONOMER"/>
<dbReference type="Proteomes" id="UP000001570">
    <property type="component" value="Chromosome"/>
</dbReference>
<dbReference type="GO" id="GO:0005829">
    <property type="term" value="C:cytosol"/>
    <property type="evidence" value="ECO:0000318"/>
    <property type="project" value="GO_Central"/>
</dbReference>
<dbReference type="GO" id="GO:0003677">
    <property type="term" value="F:DNA binding"/>
    <property type="evidence" value="ECO:0000318"/>
    <property type="project" value="GO_Central"/>
</dbReference>
<dbReference type="GO" id="GO:0030527">
    <property type="term" value="F:structural constituent of chromatin"/>
    <property type="evidence" value="ECO:0007669"/>
    <property type="project" value="InterPro"/>
</dbReference>
<dbReference type="GO" id="GO:0030261">
    <property type="term" value="P:chromosome condensation"/>
    <property type="evidence" value="ECO:0007669"/>
    <property type="project" value="UniProtKB-KW"/>
</dbReference>
<dbReference type="CDD" id="cd13831">
    <property type="entry name" value="HU"/>
    <property type="match status" value="1"/>
</dbReference>
<dbReference type="FunFam" id="4.10.520.10:FF:000001">
    <property type="entry name" value="DNA-binding protein HU"/>
    <property type="match status" value="1"/>
</dbReference>
<dbReference type="Gene3D" id="4.10.520.10">
    <property type="entry name" value="IHF-like DNA-binding proteins"/>
    <property type="match status" value="1"/>
</dbReference>
<dbReference type="InterPro" id="IPR000119">
    <property type="entry name" value="Hist_DNA-bd"/>
</dbReference>
<dbReference type="InterPro" id="IPR020816">
    <property type="entry name" value="Histone-like_DNA-bd_CS"/>
</dbReference>
<dbReference type="InterPro" id="IPR010992">
    <property type="entry name" value="IHF-like_DNA-bd_dom_sf"/>
</dbReference>
<dbReference type="PANTHER" id="PTHR33175">
    <property type="entry name" value="DNA-BINDING PROTEIN HU"/>
    <property type="match status" value="1"/>
</dbReference>
<dbReference type="PANTHER" id="PTHR33175:SF3">
    <property type="entry name" value="DNA-BINDING PROTEIN HU-BETA"/>
    <property type="match status" value="1"/>
</dbReference>
<dbReference type="Pfam" id="PF00216">
    <property type="entry name" value="Bac_DNA_binding"/>
    <property type="match status" value="1"/>
</dbReference>
<dbReference type="PRINTS" id="PR01727">
    <property type="entry name" value="DNABINDINGHU"/>
</dbReference>
<dbReference type="SMART" id="SM00411">
    <property type="entry name" value="BHL"/>
    <property type="match status" value="1"/>
</dbReference>
<dbReference type="SUPFAM" id="SSF47729">
    <property type="entry name" value="IHF-like DNA-binding proteins"/>
    <property type="match status" value="1"/>
</dbReference>
<dbReference type="PROSITE" id="PS00045">
    <property type="entry name" value="HISTONE_LIKE"/>
    <property type="match status" value="1"/>
</dbReference>
<reference key="1">
    <citation type="journal article" date="1997" name="Nature">
        <title>The complete genome sequence of the Gram-positive bacterium Bacillus subtilis.</title>
        <authorList>
            <person name="Kunst F."/>
            <person name="Ogasawara N."/>
            <person name="Moszer I."/>
            <person name="Albertini A.M."/>
            <person name="Alloni G."/>
            <person name="Azevedo V."/>
            <person name="Bertero M.G."/>
            <person name="Bessieres P."/>
            <person name="Bolotin A."/>
            <person name="Borchert S."/>
            <person name="Borriss R."/>
            <person name="Boursier L."/>
            <person name="Brans A."/>
            <person name="Braun M."/>
            <person name="Brignell S.C."/>
            <person name="Bron S."/>
            <person name="Brouillet S."/>
            <person name="Bruschi C.V."/>
            <person name="Caldwell B."/>
            <person name="Capuano V."/>
            <person name="Carter N.M."/>
            <person name="Choi S.-K."/>
            <person name="Codani J.-J."/>
            <person name="Connerton I.F."/>
            <person name="Cummings N.J."/>
            <person name="Daniel R.A."/>
            <person name="Denizot F."/>
            <person name="Devine K.M."/>
            <person name="Duesterhoeft A."/>
            <person name="Ehrlich S.D."/>
            <person name="Emmerson P.T."/>
            <person name="Entian K.-D."/>
            <person name="Errington J."/>
            <person name="Fabret C."/>
            <person name="Ferrari E."/>
            <person name="Foulger D."/>
            <person name="Fritz C."/>
            <person name="Fujita M."/>
            <person name="Fujita Y."/>
            <person name="Fuma S."/>
            <person name="Galizzi A."/>
            <person name="Galleron N."/>
            <person name="Ghim S.-Y."/>
            <person name="Glaser P."/>
            <person name="Goffeau A."/>
            <person name="Golightly E.J."/>
            <person name="Grandi G."/>
            <person name="Guiseppi G."/>
            <person name="Guy B.J."/>
            <person name="Haga K."/>
            <person name="Haiech J."/>
            <person name="Harwood C.R."/>
            <person name="Henaut A."/>
            <person name="Hilbert H."/>
            <person name="Holsappel S."/>
            <person name="Hosono S."/>
            <person name="Hullo M.-F."/>
            <person name="Itaya M."/>
            <person name="Jones L.-M."/>
            <person name="Joris B."/>
            <person name="Karamata D."/>
            <person name="Kasahara Y."/>
            <person name="Klaerr-Blanchard M."/>
            <person name="Klein C."/>
            <person name="Kobayashi Y."/>
            <person name="Koetter P."/>
            <person name="Koningstein G."/>
            <person name="Krogh S."/>
            <person name="Kumano M."/>
            <person name="Kurita K."/>
            <person name="Lapidus A."/>
            <person name="Lardinois S."/>
            <person name="Lauber J."/>
            <person name="Lazarevic V."/>
            <person name="Lee S.-M."/>
            <person name="Levine A."/>
            <person name="Liu H."/>
            <person name="Masuda S."/>
            <person name="Mauel C."/>
            <person name="Medigue C."/>
            <person name="Medina N."/>
            <person name="Mellado R.P."/>
            <person name="Mizuno M."/>
            <person name="Moestl D."/>
            <person name="Nakai S."/>
            <person name="Noback M."/>
            <person name="Noone D."/>
            <person name="O'Reilly M."/>
            <person name="Ogawa K."/>
            <person name="Ogiwara A."/>
            <person name="Oudega B."/>
            <person name="Park S.-H."/>
            <person name="Parro V."/>
            <person name="Pohl T.M."/>
            <person name="Portetelle D."/>
            <person name="Porwollik S."/>
            <person name="Prescott A.M."/>
            <person name="Presecan E."/>
            <person name="Pujic P."/>
            <person name="Purnelle B."/>
            <person name="Rapoport G."/>
            <person name="Rey M."/>
            <person name="Reynolds S."/>
            <person name="Rieger M."/>
            <person name="Rivolta C."/>
            <person name="Rocha E."/>
            <person name="Roche B."/>
            <person name="Rose M."/>
            <person name="Sadaie Y."/>
            <person name="Sato T."/>
            <person name="Scanlan E."/>
            <person name="Schleich S."/>
            <person name="Schroeter R."/>
            <person name="Scoffone F."/>
            <person name="Sekiguchi J."/>
            <person name="Sekowska A."/>
            <person name="Seror S.J."/>
            <person name="Serror P."/>
            <person name="Shin B.-S."/>
            <person name="Soldo B."/>
            <person name="Sorokin A."/>
            <person name="Tacconi E."/>
            <person name="Takagi T."/>
            <person name="Takahashi H."/>
            <person name="Takemaru K."/>
            <person name="Takeuchi M."/>
            <person name="Tamakoshi A."/>
            <person name="Tanaka T."/>
            <person name="Terpstra P."/>
            <person name="Tognoni A."/>
            <person name="Tosato V."/>
            <person name="Uchiyama S."/>
            <person name="Vandenbol M."/>
            <person name="Vannier F."/>
            <person name="Vassarotti A."/>
            <person name="Viari A."/>
            <person name="Wambutt R."/>
            <person name="Wedler E."/>
            <person name="Wedler H."/>
            <person name="Weitzenegger T."/>
            <person name="Winters P."/>
            <person name="Wipat A."/>
            <person name="Yamamoto H."/>
            <person name="Yamane K."/>
            <person name="Yasumoto K."/>
            <person name="Yata K."/>
            <person name="Yoshida K."/>
            <person name="Yoshikawa H.-F."/>
            <person name="Zumstein E."/>
            <person name="Yoshikawa H."/>
            <person name="Danchin A."/>
        </authorList>
    </citation>
    <scope>NUCLEOTIDE SEQUENCE [LARGE SCALE GENOMIC DNA]</scope>
    <source>
        <strain>168</strain>
    </source>
</reference>